<keyword id="KW-0687">Ribonucleoprotein</keyword>
<keyword id="KW-0689">Ribosomal protein</keyword>
<keyword id="KW-0694">RNA-binding</keyword>
<keyword id="KW-0699">rRNA-binding</keyword>
<keyword id="KW-0820">tRNA-binding</keyword>
<sequence length="156" mass="17773">MSRRHSAEKREINPDPKFGDLIVTKFMNAVMYDGKKSVAETIVYGALDQVQSKTKQEPVTVFHQALDNVAPHVEVRSRRVGGATYQVPVDVRPERRQALAIRWLIAAARNRNETTMIDRLSGELMDAANNRGTAVKKREDTHKMAEANRAFAHYRW</sequence>
<evidence type="ECO:0000255" key="1">
    <source>
        <dbReference type="HAMAP-Rule" id="MF_00480"/>
    </source>
</evidence>
<evidence type="ECO:0000305" key="2"/>
<organism>
    <name type="scientific">Mesorhizobium japonicum (strain LMG 29417 / CECT 9101 / MAFF 303099)</name>
    <name type="common">Mesorhizobium loti (strain MAFF 303099)</name>
    <dbReference type="NCBI Taxonomy" id="266835"/>
    <lineage>
        <taxon>Bacteria</taxon>
        <taxon>Pseudomonadati</taxon>
        <taxon>Pseudomonadota</taxon>
        <taxon>Alphaproteobacteria</taxon>
        <taxon>Hyphomicrobiales</taxon>
        <taxon>Phyllobacteriaceae</taxon>
        <taxon>Mesorhizobium</taxon>
    </lineage>
</organism>
<accession>Q98N60</accession>
<reference key="1">
    <citation type="journal article" date="2000" name="DNA Res.">
        <title>Complete genome structure of the nitrogen-fixing symbiotic bacterium Mesorhizobium loti.</title>
        <authorList>
            <person name="Kaneko T."/>
            <person name="Nakamura Y."/>
            <person name="Sato S."/>
            <person name="Asamizu E."/>
            <person name="Kato T."/>
            <person name="Sasamoto S."/>
            <person name="Watanabe A."/>
            <person name="Idesawa K."/>
            <person name="Ishikawa A."/>
            <person name="Kawashima K."/>
            <person name="Kimura T."/>
            <person name="Kishida Y."/>
            <person name="Kiyokawa C."/>
            <person name="Kohara M."/>
            <person name="Matsumoto M."/>
            <person name="Matsuno A."/>
            <person name="Mochizuki Y."/>
            <person name="Nakayama S."/>
            <person name="Nakazaki N."/>
            <person name="Shimpo S."/>
            <person name="Sugimoto M."/>
            <person name="Takeuchi C."/>
            <person name="Yamada M."/>
            <person name="Tabata S."/>
        </authorList>
    </citation>
    <scope>NUCLEOTIDE SEQUENCE [LARGE SCALE GENOMIC DNA]</scope>
    <source>
        <strain>LMG 29417 / CECT 9101 / MAFF 303099</strain>
    </source>
</reference>
<proteinExistence type="inferred from homology"/>
<feature type="chain" id="PRO_0000124326" description="Small ribosomal subunit protein uS7">
    <location>
        <begin position="1"/>
        <end position="156"/>
    </location>
</feature>
<dbReference type="EMBL" id="BA000012">
    <property type="protein sequence ID" value="BAB47902.1"/>
    <property type="molecule type" value="Genomic_DNA"/>
</dbReference>
<dbReference type="RefSeq" id="WP_006202127.1">
    <property type="nucleotide sequence ID" value="NC_002678.2"/>
</dbReference>
<dbReference type="SMR" id="Q98N60"/>
<dbReference type="GeneID" id="66684220"/>
<dbReference type="KEGG" id="mlo:mlr0284"/>
<dbReference type="eggNOG" id="COG0049">
    <property type="taxonomic scope" value="Bacteria"/>
</dbReference>
<dbReference type="HOGENOM" id="CLU_072226_1_1_5"/>
<dbReference type="Proteomes" id="UP000000552">
    <property type="component" value="Chromosome"/>
</dbReference>
<dbReference type="GO" id="GO:0015935">
    <property type="term" value="C:small ribosomal subunit"/>
    <property type="evidence" value="ECO:0007669"/>
    <property type="project" value="InterPro"/>
</dbReference>
<dbReference type="GO" id="GO:0019843">
    <property type="term" value="F:rRNA binding"/>
    <property type="evidence" value="ECO:0007669"/>
    <property type="project" value="UniProtKB-UniRule"/>
</dbReference>
<dbReference type="GO" id="GO:0003735">
    <property type="term" value="F:structural constituent of ribosome"/>
    <property type="evidence" value="ECO:0007669"/>
    <property type="project" value="InterPro"/>
</dbReference>
<dbReference type="GO" id="GO:0000049">
    <property type="term" value="F:tRNA binding"/>
    <property type="evidence" value="ECO:0007669"/>
    <property type="project" value="UniProtKB-UniRule"/>
</dbReference>
<dbReference type="GO" id="GO:0006412">
    <property type="term" value="P:translation"/>
    <property type="evidence" value="ECO:0007669"/>
    <property type="project" value="UniProtKB-UniRule"/>
</dbReference>
<dbReference type="CDD" id="cd14869">
    <property type="entry name" value="uS7_Bacteria"/>
    <property type="match status" value="1"/>
</dbReference>
<dbReference type="FunFam" id="1.10.455.10:FF:000001">
    <property type="entry name" value="30S ribosomal protein S7"/>
    <property type="match status" value="1"/>
</dbReference>
<dbReference type="Gene3D" id="1.10.455.10">
    <property type="entry name" value="Ribosomal protein S7 domain"/>
    <property type="match status" value="1"/>
</dbReference>
<dbReference type="HAMAP" id="MF_00480_B">
    <property type="entry name" value="Ribosomal_uS7_B"/>
    <property type="match status" value="1"/>
</dbReference>
<dbReference type="InterPro" id="IPR000235">
    <property type="entry name" value="Ribosomal_uS7"/>
</dbReference>
<dbReference type="InterPro" id="IPR005717">
    <property type="entry name" value="Ribosomal_uS7_bac/org-type"/>
</dbReference>
<dbReference type="InterPro" id="IPR020606">
    <property type="entry name" value="Ribosomal_uS7_CS"/>
</dbReference>
<dbReference type="InterPro" id="IPR023798">
    <property type="entry name" value="Ribosomal_uS7_dom"/>
</dbReference>
<dbReference type="InterPro" id="IPR036823">
    <property type="entry name" value="Ribosomal_uS7_dom_sf"/>
</dbReference>
<dbReference type="NCBIfam" id="TIGR01029">
    <property type="entry name" value="rpsG_bact"/>
    <property type="match status" value="1"/>
</dbReference>
<dbReference type="PANTHER" id="PTHR11205">
    <property type="entry name" value="RIBOSOMAL PROTEIN S7"/>
    <property type="match status" value="1"/>
</dbReference>
<dbReference type="Pfam" id="PF00177">
    <property type="entry name" value="Ribosomal_S7"/>
    <property type="match status" value="1"/>
</dbReference>
<dbReference type="PIRSF" id="PIRSF002122">
    <property type="entry name" value="RPS7p_RPS7a_RPS5e_RPS7o"/>
    <property type="match status" value="1"/>
</dbReference>
<dbReference type="SUPFAM" id="SSF47973">
    <property type="entry name" value="Ribosomal protein S7"/>
    <property type="match status" value="1"/>
</dbReference>
<dbReference type="PROSITE" id="PS00052">
    <property type="entry name" value="RIBOSOMAL_S7"/>
    <property type="match status" value="1"/>
</dbReference>
<name>RS7_RHILO</name>
<comment type="function">
    <text evidence="1">One of the primary rRNA binding proteins, it binds directly to 16S rRNA where it nucleates assembly of the head domain of the 30S subunit. Is located at the subunit interface close to the decoding center, probably blocks exit of the E-site tRNA.</text>
</comment>
<comment type="subunit">
    <text evidence="1">Part of the 30S ribosomal subunit. Contacts proteins S9 and S11.</text>
</comment>
<comment type="similarity">
    <text evidence="1">Belongs to the universal ribosomal protein uS7 family.</text>
</comment>
<protein>
    <recommendedName>
        <fullName evidence="1">Small ribosomal subunit protein uS7</fullName>
    </recommendedName>
    <alternativeName>
        <fullName evidence="2">30S ribosomal protein S7</fullName>
    </alternativeName>
</protein>
<gene>
    <name evidence="1" type="primary">rpsG</name>
    <name type="ordered locus">mlr0284</name>
</gene>